<accession>Q97R60</accession>
<name>COAE_STRPN</name>
<evidence type="ECO:0000255" key="1">
    <source>
        <dbReference type="HAMAP-Rule" id="MF_00376"/>
    </source>
</evidence>
<reference key="1">
    <citation type="journal article" date="2001" name="Science">
        <title>Complete genome sequence of a virulent isolate of Streptococcus pneumoniae.</title>
        <authorList>
            <person name="Tettelin H."/>
            <person name="Nelson K.E."/>
            <person name="Paulsen I.T."/>
            <person name="Eisen J.A."/>
            <person name="Read T.D."/>
            <person name="Peterson S.N."/>
            <person name="Heidelberg J.F."/>
            <person name="DeBoy R.T."/>
            <person name="Haft D.H."/>
            <person name="Dodson R.J."/>
            <person name="Durkin A.S."/>
            <person name="Gwinn M.L."/>
            <person name="Kolonay J.F."/>
            <person name="Nelson W.C."/>
            <person name="Peterson J.D."/>
            <person name="Umayam L.A."/>
            <person name="White O."/>
            <person name="Salzberg S.L."/>
            <person name="Lewis M.R."/>
            <person name="Radune D."/>
            <person name="Holtzapple E.K."/>
            <person name="Khouri H.M."/>
            <person name="Wolf A.M."/>
            <person name="Utterback T.R."/>
            <person name="Hansen C.L."/>
            <person name="McDonald L.A."/>
            <person name="Feldblyum T.V."/>
            <person name="Angiuoli S.V."/>
            <person name="Dickinson T."/>
            <person name="Hickey E.K."/>
            <person name="Holt I.E."/>
            <person name="Loftus B.J."/>
            <person name="Yang F."/>
            <person name="Smith H.O."/>
            <person name="Venter J.C."/>
            <person name="Dougherty B.A."/>
            <person name="Morrison D.A."/>
            <person name="Hollingshead S.K."/>
            <person name="Fraser C.M."/>
        </authorList>
    </citation>
    <scope>NUCLEOTIDE SEQUENCE [LARGE SCALE GENOMIC DNA]</scope>
    <source>
        <strain>ATCC BAA-334 / TIGR4</strain>
    </source>
</reference>
<dbReference type="EC" id="2.7.1.24" evidence="1"/>
<dbReference type="EMBL" id="AE005672">
    <property type="protein sequence ID" value="AAK75092.1"/>
    <property type="molecule type" value="Genomic_DNA"/>
</dbReference>
<dbReference type="PIR" id="C95112">
    <property type="entry name" value="C95112"/>
</dbReference>
<dbReference type="RefSeq" id="WP_000516207.1">
    <property type="nucleotide sequence ID" value="NZ_CP155539.1"/>
</dbReference>
<dbReference type="SMR" id="Q97R60"/>
<dbReference type="PaxDb" id="170187-SP_0971"/>
<dbReference type="EnsemblBacteria" id="AAK75092">
    <property type="protein sequence ID" value="AAK75092"/>
    <property type="gene ID" value="SP_0971"/>
</dbReference>
<dbReference type="KEGG" id="spn:SP_0971"/>
<dbReference type="eggNOG" id="COG0237">
    <property type="taxonomic scope" value="Bacteria"/>
</dbReference>
<dbReference type="PhylomeDB" id="Q97R60"/>
<dbReference type="BioCyc" id="SPNE170187:G1FZB-999-MONOMER"/>
<dbReference type="UniPathway" id="UPA00241">
    <property type="reaction ID" value="UER00356"/>
</dbReference>
<dbReference type="Proteomes" id="UP000000585">
    <property type="component" value="Chromosome"/>
</dbReference>
<dbReference type="GO" id="GO:0005737">
    <property type="term" value="C:cytoplasm"/>
    <property type="evidence" value="ECO:0007669"/>
    <property type="project" value="UniProtKB-SubCell"/>
</dbReference>
<dbReference type="GO" id="GO:0005524">
    <property type="term" value="F:ATP binding"/>
    <property type="evidence" value="ECO:0007669"/>
    <property type="project" value="UniProtKB-UniRule"/>
</dbReference>
<dbReference type="GO" id="GO:0004140">
    <property type="term" value="F:dephospho-CoA kinase activity"/>
    <property type="evidence" value="ECO:0007669"/>
    <property type="project" value="UniProtKB-UniRule"/>
</dbReference>
<dbReference type="GO" id="GO:0015937">
    <property type="term" value="P:coenzyme A biosynthetic process"/>
    <property type="evidence" value="ECO:0007669"/>
    <property type="project" value="UniProtKB-UniRule"/>
</dbReference>
<dbReference type="CDD" id="cd02022">
    <property type="entry name" value="DPCK"/>
    <property type="match status" value="1"/>
</dbReference>
<dbReference type="FunFam" id="3.40.50.300:FF:000991">
    <property type="entry name" value="Dephospho-CoA kinase"/>
    <property type="match status" value="1"/>
</dbReference>
<dbReference type="Gene3D" id="3.40.50.300">
    <property type="entry name" value="P-loop containing nucleotide triphosphate hydrolases"/>
    <property type="match status" value="1"/>
</dbReference>
<dbReference type="HAMAP" id="MF_00376">
    <property type="entry name" value="Dephospho_CoA_kinase"/>
    <property type="match status" value="1"/>
</dbReference>
<dbReference type="InterPro" id="IPR001977">
    <property type="entry name" value="Depp_CoAkinase"/>
</dbReference>
<dbReference type="InterPro" id="IPR027417">
    <property type="entry name" value="P-loop_NTPase"/>
</dbReference>
<dbReference type="NCBIfam" id="TIGR00152">
    <property type="entry name" value="dephospho-CoA kinase"/>
    <property type="match status" value="1"/>
</dbReference>
<dbReference type="PANTHER" id="PTHR10695:SF46">
    <property type="entry name" value="BIFUNCTIONAL COENZYME A SYNTHASE-RELATED"/>
    <property type="match status" value="1"/>
</dbReference>
<dbReference type="PANTHER" id="PTHR10695">
    <property type="entry name" value="DEPHOSPHO-COA KINASE-RELATED"/>
    <property type="match status" value="1"/>
</dbReference>
<dbReference type="Pfam" id="PF01121">
    <property type="entry name" value="CoaE"/>
    <property type="match status" value="1"/>
</dbReference>
<dbReference type="SUPFAM" id="SSF52540">
    <property type="entry name" value="P-loop containing nucleoside triphosphate hydrolases"/>
    <property type="match status" value="1"/>
</dbReference>
<dbReference type="PROSITE" id="PS51219">
    <property type="entry name" value="DPCK"/>
    <property type="match status" value="1"/>
</dbReference>
<organism>
    <name type="scientific">Streptococcus pneumoniae serotype 4 (strain ATCC BAA-334 / TIGR4)</name>
    <dbReference type="NCBI Taxonomy" id="170187"/>
    <lineage>
        <taxon>Bacteria</taxon>
        <taxon>Bacillati</taxon>
        <taxon>Bacillota</taxon>
        <taxon>Bacilli</taxon>
        <taxon>Lactobacillales</taxon>
        <taxon>Streptococcaceae</taxon>
        <taxon>Streptococcus</taxon>
    </lineage>
</organism>
<feature type="chain" id="PRO_0000173012" description="Dephospho-CoA kinase">
    <location>
        <begin position="1"/>
        <end position="201"/>
    </location>
</feature>
<feature type="domain" description="DPCK" evidence="1">
    <location>
        <begin position="4"/>
        <end position="201"/>
    </location>
</feature>
<feature type="binding site" evidence="1">
    <location>
        <begin position="12"/>
        <end position="17"/>
    </location>
    <ligand>
        <name>ATP</name>
        <dbReference type="ChEBI" id="CHEBI:30616"/>
    </ligand>
</feature>
<proteinExistence type="inferred from homology"/>
<protein>
    <recommendedName>
        <fullName evidence="1">Dephospho-CoA kinase</fullName>
        <ecNumber evidence="1">2.7.1.24</ecNumber>
    </recommendedName>
    <alternativeName>
        <fullName evidence="1">Dephosphocoenzyme A kinase</fullName>
    </alternativeName>
</protein>
<sequence length="201" mass="23005">MGKIIGITGGIASGKSTVTNFLRQQGFQVVDADAVVHQLQKPGGRLFEALVQHFGQEIILENGELNRPLLASLIFSNPDEREWSKQIQGEIIREELATLREQLAQTEEIFFMDIPLLFEQDYSDWFAETWLVYVDRDAQVERLMKRDQLSKDEAESRLAAQWPLEKKKDLASQVLDNNGNQNQLLNQVHILLEGGRQDDRD</sequence>
<gene>
    <name evidence="1" type="primary">coaE</name>
    <name type="ordered locus">SP_0971</name>
</gene>
<comment type="function">
    <text evidence="1">Catalyzes the phosphorylation of the 3'-hydroxyl group of dephosphocoenzyme A to form coenzyme A.</text>
</comment>
<comment type="catalytic activity">
    <reaction evidence="1">
        <text>3'-dephospho-CoA + ATP = ADP + CoA + H(+)</text>
        <dbReference type="Rhea" id="RHEA:18245"/>
        <dbReference type="ChEBI" id="CHEBI:15378"/>
        <dbReference type="ChEBI" id="CHEBI:30616"/>
        <dbReference type="ChEBI" id="CHEBI:57287"/>
        <dbReference type="ChEBI" id="CHEBI:57328"/>
        <dbReference type="ChEBI" id="CHEBI:456216"/>
        <dbReference type="EC" id="2.7.1.24"/>
    </reaction>
</comment>
<comment type="pathway">
    <text evidence="1">Cofactor biosynthesis; coenzyme A biosynthesis; CoA from (R)-pantothenate: step 5/5.</text>
</comment>
<comment type="subcellular location">
    <subcellularLocation>
        <location evidence="1">Cytoplasm</location>
    </subcellularLocation>
</comment>
<comment type="similarity">
    <text evidence="1">Belongs to the CoaE family.</text>
</comment>
<keyword id="KW-0067">ATP-binding</keyword>
<keyword id="KW-0173">Coenzyme A biosynthesis</keyword>
<keyword id="KW-0963">Cytoplasm</keyword>
<keyword id="KW-0418">Kinase</keyword>
<keyword id="KW-0547">Nucleotide-binding</keyword>
<keyword id="KW-1185">Reference proteome</keyword>
<keyword id="KW-0808">Transferase</keyword>